<evidence type="ECO:0000255" key="1">
    <source>
        <dbReference type="HAMAP-Rule" id="MF_00455"/>
    </source>
</evidence>
<keyword id="KW-0119">Carbohydrate metabolism</keyword>
<keyword id="KW-0963">Cytoplasm</keyword>
<keyword id="KW-0413">Isomerase</keyword>
<keyword id="KW-0460">Magnesium</keyword>
<keyword id="KW-0479">Metal-binding</keyword>
<keyword id="KW-1185">Reference proteome</keyword>
<keyword id="KW-0859">Xylose metabolism</keyword>
<protein>
    <recommendedName>
        <fullName evidence="1">Xylose isomerase</fullName>
        <ecNumber evidence="1">5.3.1.5</ecNumber>
    </recommendedName>
</protein>
<feature type="chain" id="PRO_1000200285" description="Xylose isomerase">
    <location>
        <begin position="1"/>
        <end position="441"/>
    </location>
</feature>
<feature type="active site" evidence="1">
    <location>
        <position position="100"/>
    </location>
</feature>
<feature type="active site" evidence="1">
    <location>
        <position position="103"/>
    </location>
</feature>
<feature type="binding site" evidence="1">
    <location>
        <position position="231"/>
    </location>
    <ligand>
        <name>Mg(2+)</name>
        <dbReference type="ChEBI" id="CHEBI:18420"/>
        <label>1</label>
    </ligand>
</feature>
<feature type="binding site" evidence="1">
    <location>
        <position position="267"/>
    </location>
    <ligand>
        <name>Mg(2+)</name>
        <dbReference type="ChEBI" id="CHEBI:18420"/>
        <label>1</label>
    </ligand>
</feature>
<feature type="binding site" evidence="1">
    <location>
        <position position="267"/>
    </location>
    <ligand>
        <name>Mg(2+)</name>
        <dbReference type="ChEBI" id="CHEBI:18420"/>
        <label>2</label>
    </ligand>
</feature>
<feature type="binding site" evidence="1">
    <location>
        <position position="270"/>
    </location>
    <ligand>
        <name>Mg(2+)</name>
        <dbReference type="ChEBI" id="CHEBI:18420"/>
        <label>2</label>
    </ligand>
</feature>
<feature type="binding site" evidence="1">
    <location>
        <position position="295"/>
    </location>
    <ligand>
        <name>Mg(2+)</name>
        <dbReference type="ChEBI" id="CHEBI:18420"/>
        <label>1</label>
    </ligand>
</feature>
<feature type="binding site" evidence="1">
    <location>
        <position position="306"/>
    </location>
    <ligand>
        <name>Mg(2+)</name>
        <dbReference type="ChEBI" id="CHEBI:18420"/>
        <label>2</label>
    </ligand>
</feature>
<feature type="binding site" evidence="1">
    <location>
        <position position="308"/>
    </location>
    <ligand>
        <name>Mg(2+)</name>
        <dbReference type="ChEBI" id="CHEBI:18420"/>
        <label>2</label>
    </ligand>
</feature>
<feature type="binding site" evidence="1">
    <location>
        <position position="338"/>
    </location>
    <ligand>
        <name>Mg(2+)</name>
        <dbReference type="ChEBI" id="CHEBI:18420"/>
        <label>1</label>
    </ligand>
</feature>
<sequence>MSYFEHLPAVRYEGPQTDNPFAYRHYDKDKLVLGKRMEDHLRVAVCYWHTFVWPGADMFGPGTFERPWHHAGDALEMAHAKADHAFELFSKLGTPFYTFHDLDVAPEGDSIKSYVNNFKAMTDVLARKQEQTGIKLLWGTANLFSHPRYAAGAATNPNPDVFAFAATQVLNALEATQRLGGANYVLWGGREGYETLLNTDLKREREQLGRFMSMVVEHKHKTGFKGALLIEPKPQEPTKHQYDYDVATVHGFLTQFGLQDEIRVNIEANHATLAGHSFHHEIANAFALGIFGSVDANRGDAQNGWDTDQFPNSVEELTLAFYEILRNGGFTTGGMNFDAKVRRQSIDPEDIVHGHIGAIDVLAVALERAAHLIEHDRLAAFKQQRYAGWDSDFGRKILAGGYSLESLASDAVQRNIAPRHVSGQQERLENIVNQAIFSSAK</sequence>
<proteinExistence type="inferred from homology"/>
<reference key="1">
    <citation type="journal article" date="2014" name="Stand. Genomic Sci.">
        <title>Complete genome sequence of Burkholderia phymatum STM815(T), a broad host range and efficient nitrogen-fixing symbiont of Mimosa species.</title>
        <authorList>
            <person name="Moulin L."/>
            <person name="Klonowska A."/>
            <person name="Caroline B."/>
            <person name="Booth K."/>
            <person name="Vriezen J.A."/>
            <person name="Melkonian R."/>
            <person name="James E.K."/>
            <person name="Young J.P."/>
            <person name="Bena G."/>
            <person name="Hauser L."/>
            <person name="Land M."/>
            <person name="Kyrpides N."/>
            <person name="Bruce D."/>
            <person name="Chain P."/>
            <person name="Copeland A."/>
            <person name="Pitluck S."/>
            <person name="Woyke T."/>
            <person name="Lizotte-Waniewski M."/>
            <person name="Bristow J."/>
            <person name="Riley M."/>
        </authorList>
    </citation>
    <scope>NUCLEOTIDE SEQUENCE [LARGE SCALE GENOMIC DNA]</scope>
    <source>
        <strain>DSM 17167 / CIP 108236 / LMG 21445 / STM815</strain>
    </source>
</reference>
<name>XYLA_PARP8</name>
<accession>B2JFE9</accession>
<gene>
    <name evidence="1" type="primary">xylA</name>
    <name type="ordered locus">Bphy_2342</name>
</gene>
<dbReference type="EC" id="5.3.1.5" evidence="1"/>
<dbReference type="EMBL" id="CP001043">
    <property type="protein sequence ID" value="ACC71517.1"/>
    <property type="molecule type" value="Genomic_DNA"/>
</dbReference>
<dbReference type="RefSeq" id="WP_012401722.1">
    <property type="nucleotide sequence ID" value="NC_010622.1"/>
</dbReference>
<dbReference type="SMR" id="B2JFE9"/>
<dbReference type="STRING" id="391038.Bphy_2342"/>
<dbReference type="KEGG" id="bph:Bphy_2342"/>
<dbReference type="eggNOG" id="COG2115">
    <property type="taxonomic scope" value="Bacteria"/>
</dbReference>
<dbReference type="HOGENOM" id="CLU_037261_1_0_4"/>
<dbReference type="OrthoDB" id="9763981at2"/>
<dbReference type="Proteomes" id="UP000001192">
    <property type="component" value="Chromosome 1"/>
</dbReference>
<dbReference type="GO" id="GO:0005737">
    <property type="term" value="C:cytoplasm"/>
    <property type="evidence" value="ECO:0007669"/>
    <property type="project" value="UniProtKB-SubCell"/>
</dbReference>
<dbReference type="GO" id="GO:0000287">
    <property type="term" value="F:magnesium ion binding"/>
    <property type="evidence" value="ECO:0007669"/>
    <property type="project" value="UniProtKB-UniRule"/>
</dbReference>
<dbReference type="GO" id="GO:0009045">
    <property type="term" value="F:xylose isomerase activity"/>
    <property type="evidence" value="ECO:0007669"/>
    <property type="project" value="UniProtKB-UniRule"/>
</dbReference>
<dbReference type="GO" id="GO:0042732">
    <property type="term" value="P:D-xylose metabolic process"/>
    <property type="evidence" value="ECO:0007669"/>
    <property type="project" value="UniProtKB-UniRule"/>
</dbReference>
<dbReference type="FunFam" id="3.20.20.150:FF:000002">
    <property type="entry name" value="Xylose isomerase"/>
    <property type="match status" value="1"/>
</dbReference>
<dbReference type="Gene3D" id="3.20.20.150">
    <property type="entry name" value="Divalent-metal-dependent TIM barrel enzymes"/>
    <property type="match status" value="1"/>
</dbReference>
<dbReference type="HAMAP" id="MF_00455">
    <property type="entry name" value="Xylose_isom_A"/>
    <property type="match status" value="1"/>
</dbReference>
<dbReference type="InterPro" id="IPR036237">
    <property type="entry name" value="Xyl_isomerase-like_sf"/>
</dbReference>
<dbReference type="InterPro" id="IPR013452">
    <property type="entry name" value="Xylose_isom_bac"/>
</dbReference>
<dbReference type="InterPro" id="IPR001998">
    <property type="entry name" value="Xylose_isomerase"/>
</dbReference>
<dbReference type="NCBIfam" id="NF003998">
    <property type="entry name" value="PRK05474.1"/>
    <property type="match status" value="1"/>
</dbReference>
<dbReference type="NCBIfam" id="TIGR02630">
    <property type="entry name" value="xylose_isom_A"/>
    <property type="match status" value="1"/>
</dbReference>
<dbReference type="PANTHER" id="PTHR48408">
    <property type="match status" value="1"/>
</dbReference>
<dbReference type="PANTHER" id="PTHR48408:SF1">
    <property type="entry name" value="XYLOSE ISOMERASE"/>
    <property type="match status" value="1"/>
</dbReference>
<dbReference type="PRINTS" id="PR00688">
    <property type="entry name" value="XYLOSISMRASE"/>
</dbReference>
<dbReference type="SUPFAM" id="SSF51658">
    <property type="entry name" value="Xylose isomerase-like"/>
    <property type="match status" value="1"/>
</dbReference>
<dbReference type="PROSITE" id="PS51415">
    <property type="entry name" value="XYLOSE_ISOMERASE"/>
    <property type="match status" value="1"/>
</dbReference>
<comment type="catalytic activity">
    <reaction evidence="1">
        <text>alpha-D-xylose = alpha-D-xylulofuranose</text>
        <dbReference type="Rhea" id="RHEA:22816"/>
        <dbReference type="ChEBI" id="CHEBI:28518"/>
        <dbReference type="ChEBI" id="CHEBI:188998"/>
        <dbReference type="EC" id="5.3.1.5"/>
    </reaction>
</comment>
<comment type="cofactor">
    <cofactor evidence="1">
        <name>Mg(2+)</name>
        <dbReference type="ChEBI" id="CHEBI:18420"/>
    </cofactor>
    <text evidence="1">Binds 2 magnesium ions per subunit.</text>
</comment>
<comment type="subunit">
    <text evidence="1">Homotetramer.</text>
</comment>
<comment type="subcellular location">
    <subcellularLocation>
        <location evidence="1">Cytoplasm</location>
    </subcellularLocation>
</comment>
<comment type="similarity">
    <text evidence="1">Belongs to the xylose isomerase family.</text>
</comment>
<organism>
    <name type="scientific">Paraburkholderia phymatum (strain DSM 17167 / CIP 108236 / LMG 21445 / STM815)</name>
    <name type="common">Burkholderia phymatum</name>
    <dbReference type="NCBI Taxonomy" id="391038"/>
    <lineage>
        <taxon>Bacteria</taxon>
        <taxon>Pseudomonadati</taxon>
        <taxon>Pseudomonadota</taxon>
        <taxon>Betaproteobacteria</taxon>
        <taxon>Burkholderiales</taxon>
        <taxon>Burkholderiaceae</taxon>
        <taxon>Paraburkholderia</taxon>
    </lineage>
</organism>